<keyword id="KW-0156">Chromatin regulator</keyword>
<keyword id="KW-0539">Nucleus</keyword>
<keyword id="KW-1185">Reference proteome</keyword>
<keyword id="KW-0677">Repeat</keyword>
<keyword id="KW-0678">Repressor</keyword>
<keyword id="KW-0804">Transcription</keyword>
<keyword id="KW-0805">Transcription regulation</keyword>
<keyword id="KW-0853">WD repeat</keyword>
<accession>Q4WTC4</accession>
<gene>
    <name type="primary">hir1</name>
    <name type="ORF">AFUA_1G09790</name>
</gene>
<evidence type="ECO:0000250" key="1"/>
<evidence type="ECO:0000256" key="2">
    <source>
        <dbReference type="SAM" id="MobiDB-lite"/>
    </source>
</evidence>
<evidence type="ECO:0000305" key="3"/>
<proteinExistence type="inferred from homology"/>
<sequence length="1043" mass="112748">MEHEVGMDADISDFTLGADGYVRIWSTEAIYNTGNPEYANKPKQLASMSNHSGTIHTVRFSPNGKYLASGADDKIVCIYTLDANPPSHASTFGSNEAPPVENWRTIRRLIGHDNDVQDLGWSYDSSILVSVGLDSKVVVWSGHTFEKLKTLSIHQSHVKGITFDPANKYFATASDDRTVRIFRFTSPSPNSTAHDQMNNFVLEHTISAPFQNSPLTAYFRRCSWSPDGMHIAAANAVNGPVSSVAIINRGSWDGDINLIGHEAPVEVCAFSPRLYSSQPVSKSAVDNQNHAMQNVTVIACAGGDKSLSIWITSNPRPIVVAQEMAAKSISDLAWSPDGKCLFATALDGTILAVRFEDGELGYPMAMEENEKSLTKFGTNRRGAGIAETTDGLLLEEKSKAGEIKDVEGRMGALMGDGHATAESMVNGKTAPLPSNGATPARGPSPAADTQKAQPNGTAATPAAPEPEKPDPYQAKLERLKQRPTYTKDGKKRIAPLLVSGAGAAESSLPQARLMASVSSQVKADVPQSIVDLSKPFDGLPKGGLSALLFGNKRKLAQLEGDEDGHVEKRVALASQNGATPILANTPDGLLPAQPQPAPTGQQPTPEFIRPAVTNPCMAISQLRLAVPKVRSQIVRAIDSNGRPTEPPSATGEPGKSRADVVFEARNPSPASLTGRAVDREPVRLTLFRGEQPLWQDFLPRTVLLVTGNQSMWSAACEDGSVYIWSPAGRRLVSALVLEAQPVILECNGPWILCISAVGMCYVWNVKHLSSPHPPISLQPVLDAAIHTLGAHPSAAPAITNARINSEGRVVVALSNGEGYSYSPSMYTWQRVSEAWWAVGSQYWNSTEAPVGNLQSAGPQQDKETTAAVSAGIIPFLERNTTNETLLRGRAYFLQRLIKVLLSREGYESFESSVSIAHMENRLAAALSLGAKEEFRLYLSMYAKRLGAEGLKMKVEELLKGLIGGLFEEEDETGTGRRLQANEKEDRNWQESSDTLCGWPREVLLKEVILALGKHRDLQRVTVPYAKLLGVVDNESEDNDAMET</sequence>
<protein>
    <recommendedName>
        <fullName>Protein hir1</fullName>
    </recommendedName>
</protein>
<reference key="1">
    <citation type="journal article" date="2005" name="Nature">
        <title>Genomic sequence of the pathogenic and allergenic filamentous fungus Aspergillus fumigatus.</title>
        <authorList>
            <person name="Nierman W.C."/>
            <person name="Pain A."/>
            <person name="Anderson M.J."/>
            <person name="Wortman J.R."/>
            <person name="Kim H.S."/>
            <person name="Arroyo J."/>
            <person name="Berriman M."/>
            <person name="Abe K."/>
            <person name="Archer D.B."/>
            <person name="Bermejo C."/>
            <person name="Bennett J.W."/>
            <person name="Bowyer P."/>
            <person name="Chen D."/>
            <person name="Collins M."/>
            <person name="Coulsen R."/>
            <person name="Davies R."/>
            <person name="Dyer P.S."/>
            <person name="Farman M.L."/>
            <person name="Fedorova N."/>
            <person name="Fedorova N.D."/>
            <person name="Feldblyum T.V."/>
            <person name="Fischer R."/>
            <person name="Fosker N."/>
            <person name="Fraser A."/>
            <person name="Garcia J.L."/>
            <person name="Garcia M.J."/>
            <person name="Goble A."/>
            <person name="Goldman G.H."/>
            <person name="Gomi K."/>
            <person name="Griffith-Jones S."/>
            <person name="Gwilliam R."/>
            <person name="Haas B.J."/>
            <person name="Haas H."/>
            <person name="Harris D.E."/>
            <person name="Horiuchi H."/>
            <person name="Huang J."/>
            <person name="Humphray S."/>
            <person name="Jimenez J."/>
            <person name="Keller N."/>
            <person name="Khouri H."/>
            <person name="Kitamoto K."/>
            <person name="Kobayashi T."/>
            <person name="Konzack S."/>
            <person name="Kulkarni R."/>
            <person name="Kumagai T."/>
            <person name="Lafton A."/>
            <person name="Latge J.-P."/>
            <person name="Li W."/>
            <person name="Lord A."/>
            <person name="Lu C."/>
            <person name="Majoros W.H."/>
            <person name="May G.S."/>
            <person name="Miller B.L."/>
            <person name="Mohamoud Y."/>
            <person name="Molina M."/>
            <person name="Monod M."/>
            <person name="Mouyna I."/>
            <person name="Mulligan S."/>
            <person name="Murphy L.D."/>
            <person name="O'Neil S."/>
            <person name="Paulsen I."/>
            <person name="Penalva M.A."/>
            <person name="Pertea M."/>
            <person name="Price C."/>
            <person name="Pritchard B.L."/>
            <person name="Quail M.A."/>
            <person name="Rabbinowitsch E."/>
            <person name="Rawlins N."/>
            <person name="Rajandream M.A."/>
            <person name="Reichard U."/>
            <person name="Renauld H."/>
            <person name="Robson G.D."/>
            <person name="Rodriguez de Cordoba S."/>
            <person name="Rodriguez-Pena J.M."/>
            <person name="Ronning C.M."/>
            <person name="Rutter S."/>
            <person name="Salzberg S.L."/>
            <person name="Sanchez M."/>
            <person name="Sanchez-Ferrero J.C."/>
            <person name="Saunders D."/>
            <person name="Seeger K."/>
            <person name="Squares R."/>
            <person name="Squares S."/>
            <person name="Takeuchi M."/>
            <person name="Tekaia F."/>
            <person name="Turner G."/>
            <person name="Vazquez de Aldana C.R."/>
            <person name="Weidman J."/>
            <person name="White O."/>
            <person name="Woodward J.R."/>
            <person name="Yu J.-H."/>
            <person name="Fraser C.M."/>
            <person name="Galagan J.E."/>
            <person name="Asai K."/>
            <person name="Machida M."/>
            <person name="Hall N."/>
            <person name="Barrell B.G."/>
            <person name="Denning D.W."/>
        </authorList>
    </citation>
    <scope>NUCLEOTIDE SEQUENCE [LARGE SCALE GENOMIC DNA]</scope>
    <source>
        <strain>ATCC MYA-4609 / CBS 101355 / FGSC A1100 / Af293</strain>
    </source>
</reference>
<comment type="function">
    <text evidence="1">Required for replication-independent chromatin assembly and for the periodic repression of histone gene transcription during the cell cycle.</text>
</comment>
<comment type="subcellular location">
    <subcellularLocation>
        <location evidence="1">Nucleus</location>
    </subcellularLocation>
</comment>
<comment type="similarity">
    <text evidence="3">Belongs to the WD repeat HIR1 family.</text>
</comment>
<dbReference type="EMBL" id="AAHF01000004">
    <property type="protein sequence ID" value="EAL90308.1"/>
    <property type="molecule type" value="Genomic_DNA"/>
</dbReference>
<dbReference type="RefSeq" id="XP_752346.1">
    <property type="nucleotide sequence ID" value="XM_747253.1"/>
</dbReference>
<dbReference type="SMR" id="Q4WTC4"/>
<dbReference type="FunCoup" id="Q4WTC4">
    <property type="interactions" value="170"/>
</dbReference>
<dbReference type="STRING" id="330879.Q4WTC4"/>
<dbReference type="EnsemblFungi" id="EAL90308">
    <property type="protein sequence ID" value="EAL90308"/>
    <property type="gene ID" value="AFUA_1G09790"/>
</dbReference>
<dbReference type="GeneID" id="3510468"/>
<dbReference type="KEGG" id="afm:AFUA_1G09790"/>
<dbReference type="VEuPathDB" id="FungiDB:Afu1g09790"/>
<dbReference type="eggNOG" id="KOG0973">
    <property type="taxonomic scope" value="Eukaryota"/>
</dbReference>
<dbReference type="HOGENOM" id="CLU_004372_3_1_1"/>
<dbReference type="InParanoid" id="Q4WTC4"/>
<dbReference type="OMA" id="RGSWDGD"/>
<dbReference type="OrthoDB" id="1741719at2759"/>
<dbReference type="Proteomes" id="UP000002530">
    <property type="component" value="Chromosome 1"/>
</dbReference>
<dbReference type="GO" id="GO:0000785">
    <property type="term" value="C:chromatin"/>
    <property type="evidence" value="ECO:0000318"/>
    <property type="project" value="GO_Central"/>
</dbReference>
<dbReference type="GO" id="GO:0000417">
    <property type="term" value="C:HIR complex"/>
    <property type="evidence" value="ECO:0000318"/>
    <property type="project" value="GO_Central"/>
</dbReference>
<dbReference type="GO" id="GO:0005634">
    <property type="term" value="C:nucleus"/>
    <property type="evidence" value="ECO:0007669"/>
    <property type="project" value="UniProtKB-SubCell"/>
</dbReference>
<dbReference type="GO" id="GO:0006338">
    <property type="term" value="P:chromatin remodeling"/>
    <property type="evidence" value="ECO:0000318"/>
    <property type="project" value="GO_Central"/>
</dbReference>
<dbReference type="GO" id="GO:0006351">
    <property type="term" value="P:DNA-templated transcription"/>
    <property type="evidence" value="ECO:0007669"/>
    <property type="project" value="InterPro"/>
</dbReference>
<dbReference type="GO" id="GO:0006355">
    <property type="term" value="P:regulation of DNA-templated transcription"/>
    <property type="evidence" value="ECO:0007669"/>
    <property type="project" value="InterPro"/>
</dbReference>
<dbReference type="CDD" id="cd00200">
    <property type="entry name" value="WD40"/>
    <property type="match status" value="1"/>
</dbReference>
<dbReference type="FunFam" id="2.130.10.10:FF:000290">
    <property type="entry name" value="Protein HIR"/>
    <property type="match status" value="1"/>
</dbReference>
<dbReference type="FunFam" id="2.130.10.10:FF:002077">
    <property type="entry name" value="Protein HIR"/>
    <property type="match status" value="1"/>
</dbReference>
<dbReference type="Gene3D" id="2.130.10.10">
    <property type="entry name" value="YVTN repeat-like/Quinoprotein amine dehydrogenase"/>
    <property type="match status" value="2"/>
</dbReference>
<dbReference type="InterPro" id="IPR055410">
    <property type="entry name" value="CAF1B_HIR1_beta-prop"/>
</dbReference>
<dbReference type="InterPro" id="IPR031120">
    <property type="entry name" value="HIR1-like"/>
</dbReference>
<dbReference type="InterPro" id="IPR011494">
    <property type="entry name" value="HIRA-like_C"/>
</dbReference>
<dbReference type="InterPro" id="IPR019015">
    <property type="entry name" value="HIRA_B_motif"/>
</dbReference>
<dbReference type="InterPro" id="IPR015943">
    <property type="entry name" value="WD40/YVTN_repeat-like_dom_sf"/>
</dbReference>
<dbReference type="InterPro" id="IPR036322">
    <property type="entry name" value="WD40_repeat_dom_sf"/>
</dbReference>
<dbReference type="InterPro" id="IPR001680">
    <property type="entry name" value="WD40_rpt"/>
</dbReference>
<dbReference type="PANTHER" id="PTHR13831">
    <property type="entry name" value="MEMBER OF THE HIR1 FAMILY OF WD-REPEAT PROTEINS"/>
    <property type="match status" value="1"/>
</dbReference>
<dbReference type="PANTHER" id="PTHR13831:SF0">
    <property type="entry name" value="PROTEIN HIRA"/>
    <property type="match status" value="1"/>
</dbReference>
<dbReference type="Pfam" id="PF24105">
    <property type="entry name" value="Beta-prop_CAF1B_HIR1"/>
    <property type="match status" value="1"/>
</dbReference>
<dbReference type="Pfam" id="PF07569">
    <property type="entry name" value="Hira"/>
    <property type="match status" value="1"/>
</dbReference>
<dbReference type="Pfam" id="PF09453">
    <property type="entry name" value="HIRA_B"/>
    <property type="match status" value="1"/>
</dbReference>
<dbReference type="SMART" id="SM00320">
    <property type="entry name" value="WD40"/>
    <property type="match status" value="5"/>
</dbReference>
<dbReference type="SUPFAM" id="SSF50978">
    <property type="entry name" value="WD40 repeat-like"/>
    <property type="match status" value="2"/>
</dbReference>
<dbReference type="PROSITE" id="PS50082">
    <property type="entry name" value="WD_REPEATS_2"/>
    <property type="match status" value="3"/>
</dbReference>
<dbReference type="PROSITE" id="PS50294">
    <property type="entry name" value="WD_REPEATS_REGION"/>
    <property type="match status" value="1"/>
</dbReference>
<name>HIR1_ASPFU</name>
<feature type="chain" id="PRO_0000286402" description="Protein hir1">
    <location>
        <begin position="1"/>
        <end position="1043"/>
    </location>
</feature>
<feature type="repeat" description="WD 1">
    <location>
        <begin position="1"/>
        <end position="35"/>
    </location>
</feature>
<feature type="repeat" description="WD 2">
    <location>
        <begin position="50"/>
        <end position="89"/>
    </location>
</feature>
<feature type="repeat" description="WD 3">
    <location>
        <begin position="111"/>
        <end position="150"/>
    </location>
</feature>
<feature type="repeat" description="WD 4">
    <location>
        <begin position="153"/>
        <end position="192"/>
    </location>
</feature>
<feature type="repeat" description="WD 5">
    <location>
        <begin position="214"/>
        <end position="257"/>
    </location>
</feature>
<feature type="repeat" description="WD 6">
    <location>
        <begin position="260"/>
        <end position="320"/>
    </location>
</feature>
<feature type="repeat" description="WD 7">
    <location>
        <begin position="324"/>
        <end position="365"/>
    </location>
</feature>
<feature type="region of interest" description="Disordered" evidence="2">
    <location>
        <begin position="424"/>
        <end position="472"/>
    </location>
</feature>
<organism>
    <name type="scientific">Aspergillus fumigatus (strain ATCC MYA-4609 / CBS 101355 / FGSC A1100 / Af293)</name>
    <name type="common">Neosartorya fumigata</name>
    <dbReference type="NCBI Taxonomy" id="330879"/>
    <lineage>
        <taxon>Eukaryota</taxon>
        <taxon>Fungi</taxon>
        <taxon>Dikarya</taxon>
        <taxon>Ascomycota</taxon>
        <taxon>Pezizomycotina</taxon>
        <taxon>Eurotiomycetes</taxon>
        <taxon>Eurotiomycetidae</taxon>
        <taxon>Eurotiales</taxon>
        <taxon>Aspergillaceae</taxon>
        <taxon>Aspergillus</taxon>
        <taxon>Aspergillus subgen. Fumigati</taxon>
    </lineage>
</organism>